<name>RAS_EMENI</name>
<evidence type="ECO:0000250" key="1"/>
<evidence type="ECO:0000250" key="2">
    <source>
        <dbReference type="UniProtKB" id="P01112"/>
    </source>
</evidence>
<evidence type="ECO:0000305" key="3"/>
<keyword id="KW-1003">Cell membrane</keyword>
<keyword id="KW-0342">GTP-binding</keyword>
<keyword id="KW-0378">Hydrolase</keyword>
<keyword id="KW-0449">Lipoprotein</keyword>
<keyword id="KW-0472">Membrane</keyword>
<keyword id="KW-0488">Methylation</keyword>
<keyword id="KW-0547">Nucleotide-binding</keyword>
<keyword id="KW-0564">Palmitate</keyword>
<keyword id="KW-0636">Prenylation</keyword>
<keyword id="KW-1185">Reference proteome</keyword>
<accession>Q12526</accession>
<accession>C8VUY1</accession>
<accession>Q5BGZ8</accession>
<gene>
    <name type="primary">rasA</name>
    <name type="ORF">AN0182</name>
</gene>
<organism>
    <name type="scientific">Emericella nidulans (strain FGSC A4 / ATCC 38163 / CBS 112.46 / NRRL 194 / M139)</name>
    <name type="common">Aspergillus nidulans</name>
    <dbReference type="NCBI Taxonomy" id="227321"/>
    <lineage>
        <taxon>Eukaryota</taxon>
        <taxon>Fungi</taxon>
        <taxon>Dikarya</taxon>
        <taxon>Ascomycota</taxon>
        <taxon>Pezizomycotina</taxon>
        <taxon>Eurotiomycetes</taxon>
        <taxon>Eurotiomycetidae</taxon>
        <taxon>Eurotiales</taxon>
        <taxon>Aspergillaceae</taxon>
        <taxon>Aspergillus</taxon>
        <taxon>Aspergillus subgen. Nidulantes</taxon>
    </lineage>
</organism>
<dbReference type="EC" id="3.6.5.2" evidence="2"/>
<dbReference type="EMBL" id="U03025">
    <property type="protein sequence ID" value="AAA20965.1"/>
    <property type="molecule type" value="Genomic_DNA"/>
</dbReference>
<dbReference type="EMBL" id="U03023">
    <property type="protein sequence ID" value="AAA20964.1"/>
    <property type="molecule type" value="mRNA"/>
</dbReference>
<dbReference type="EMBL" id="AACD01000005">
    <property type="protein sequence ID" value="EAA66055.1"/>
    <property type="molecule type" value="Genomic_DNA"/>
</dbReference>
<dbReference type="EMBL" id="BN001308">
    <property type="protein sequence ID" value="CBF90024.1"/>
    <property type="molecule type" value="Genomic_DNA"/>
</dbReference>
<dbReference type="PIR" id="A53778">
    <property type="entry name" value="A53778"/>
</dbReference>
<dbReference type="RefSeq" id="XP_657786.1">
    <property type="nucleotide sequence ID" value="XM_652694.2"/>
</dbReference>
<dbReference type="SMR" id="Q12526"/>
<dbReference type="FunCoup" id="Q12526">
    <property type="interactions" value="477"/>
</dbReference>
<dbReference type="STRING" id="227321.Q12526"/>
<dbReference type="EnsemblFungi" id="CBF90024">
    <property type="protein sequence ID" value="CBF90024"/>
    <property type="gene ID" value="ANIA_00182"/>
</dbReference>
<dbReference type="GeneID" id="2875958"/>
<dbReference type="KEGG" id="ani:ANIA_00182"/>
<dbReference type="VEuPathDB" id="FungiDB:AN0182"/>
<dbReference type="eggNOG" id="KOG0395">
    <property type="taxonomic scope" value="Eukaryota"/>
</dbReference>
<dbReference type="HOGENOM" id="CLU_041217_9_8_1"/>
<dbReference type="InParanoid" id="Q12526"/>
<dbReference type="OMA" id="CCGGCVI"/>
<dbReference type="OrthoDB" id="5976022at2759"/>
<dbReference type="Proteomes" id="UP000000560">
    <property type="component" value="Chromosome VIII"/>
</dbReference>
<dbReference type="GO" id="GO:0005886">
    <property type="term" value="C:plasma membrane"/>
    <property type="evidence" value="ECO:0000318"/>
    <property type="project" value="GO_Central"/>
</dbReference>
<dbReference type="GO" id="GO:0003925">
    <property type="term" value="F:G protein activity"/>
    <property type="evidence" value="ECO:0007669"/>
    <property type="project" value="UniProtKB-EC"/>
</dbReference>
<dbReference type="GO" id="GO:0019003">
    <property type="term" value="F:GDP binding"/>
    <property type="evidence" value="ECO:0000318"/>
    <property type="project" value="GO_Central"/>
</dbReference>
<dbReference type="GO" id="GO:0005525">
    <property type="term" value="F:GTP binding"/>
    <property type="evidence" value="ECO:0000318"/>
    <property type="project" value="GO_Central"/>
</dbReference>
<dbReference type="GO" id="GO:0003924">
    <property type="term" value="F:GTPase activity"/>
    <property type="evidence" value="ECO:0000314"/>
    <property type="project" value="AspGD"/>
</dbReference>
<dbReference type="GO" id="GO:0048315">
    <property type="term" value="P:conidium formation"/>
    <property type="evidence" value="ECO:0000315"/>
    <property type="project" value="AspGD"/>
</dbReference>
<dbReference type="GO" id="GO:0075306">
    <property type="term" value="P:regulation of conidium formation"/>
    <property type="evidence" value="ECO:0000315"/>
    <property type="project" value="AspGD"/>
</dbReference>
<dbReference type="GO" id="GO:0007165">
    <property type="term" value="P:signal transduction"/>
    <property type="evidence" value="ECO:0007669"/>
    <property type="project" value="InterPro"/>
</dbReference>
<dbReference type="GO" id="GO:0009847">
    <property type="term" value="P:spore germination"/>
    <property type="evidence" value="ECO:0000315"/>
    <property type="project" value="AspGD"/>
</dbReference>
<dbReference type="CDD" id="cd04138">
    <property type="entry name" value="H_N_K_Ras_like"/>
    <property type="match status" value="1"/>
</dbReference>
<dbReference type="FunFam" id="3.40.50.300:FF:000080">
    <property type="entry name" value="Ras-like GTPase Ras1"/>
    <property type="match status" value="1"/>
</dbReference>
<dbReference type="Gene3D" id="3.40.50.300">
    <property type="entry name" value="P-loop containing nucleotide triphosphate hydrolases"/>
    <property type="match status" value="1"/>
</dbReference>
<dbReference type="InterPro" id="IPR027417">
    <property type="entry name" value="P-loop_NTPase"/>
</dbReference>
<dbReference type="InterPro" id="IPR005225">
    <property type="entry name" value="Small_GTP-bd"/>
</dbReference>
<dbReference type="InterPro" id="IPR001806">
    <property type="entry name" value="Small_GTPase"/>
</dbReference>
<dbReference type="InterPro" id="IPR020849">
    <property type="entry name" value="Small_GTPase_Ras-type"/>
</dbReference>
<dbReference type="NCBIfam" id="TIGR00231">
    <property type="entry name" value="small_GTP"/>
    <property type="match status" value="1"/>
</dbReference>
<dbReference type="PANTHER" id="PTHR24070">
    <property type="entry name" value="RAS, DI-RAS, AND RHEB FAMILY MEMBERS OF SMALL GTPASE SUPERFAMILY"/>
    <property type="match status" value="1"/>
</dbReference>
<dbReference type="Pfam" id="PF00071">
    <property type="entry name" value="Ras"/>
    <property type="match status" value="1"/>
</dbReference>
<dbReference type="PRINTS" id="PR00449">
    <property type="entry name" value="RASTRNSFRMNG"/>
</dbReference>
<dbReference type="SMART" id="SM00175">
    <property type="entry name" value="RAB"/>
    <property type="match status" value="1"/>
</dbReference>
<dbReference type="SMART" id="SM00176">
    <property type="entry name" value="RAN"/>
    <property type="match status" value="1"/>
</dbReference>
<dbReference type="SMART" id="SM00173">
    <property type="entry name" value="RAS"/>
    <property type="match status" value="1"/>
</dbReference>
<dbReference type="SMART" id="SM00174">
    <property type="entry name" value="RHO"/>
    <property type="match status" value="1"/>
</dbReference>
<dbReference type="SUPFAM" id="SSF52540">
    <property type="entry name" value="P-loop containing nucleoside triphosphate hydrolases"/>
    <property type="match status" value="1"/>
</dbReference>
<dbReference type="PROSITE" id="PS51421">
    <property type="entry name" value="RAS"/>
    <property type="match status" value="1"/>
</dbReference>
<protein>
    <recommendedName>
        <fullName>Ras-like protein</fullName>
        <ecNumber evidence="2">3.6.5.2</ecNumber>
    </recommendedName>
</protein>
<feature type="chain" id="PRO_0000082675" description="Ras-like protein">
    <location>
        <begin position="1"/>
        <end position="209"/>
    </location>
</feature>
<feature type="propeptide" id="PRO_0000281330" description="Removed in mature form" evidence="1">
    <location>
        <begin position="210"/>
        <end position="212"/>
    </location>
</feature>
<feature type="short sequence motif" description="Effector region">
    <location>
        <begin position="37"/>
        <end position="45"/>
    </location>
</feature>
<feature type="binding site" evidence="1">
    <location>
        <begin position="15"/>
        <end position="22"/>
    </location>
    <ligand>
        <name>GTP</name>
        <dbReference type="ChEBI" id="CHEBI:37565"/>
    </ligand>
</feature>
<feature type="binding site" evidence="1">
    <location>
        <begin position="62"/>
        <end position="66"/>
    </location>
    <ligand>
        <name>GTP</name>
        <dbReference type="ChEBI" id="CHEBI:37565"/>
    </ligand>
</feature>
<feature type="binding site" evidence="1">
    <location>
        <begin position="121"/>
        <end position="124"/>
    </location>
    <ligand>
        <name>GTP</name>
        <dbReference type="ChEBI" id="CHEBI:37565"/>
    </ligand>
</feature>
<feature type="modified residue" description="Cysteine methyl ester" evidence="1">
    <location>
        <position position="209"/>
    </location>
</feature>
<feature type="lipid moiety-binding region" description="S-palmitoyl cysteine" evidence="1">
    <location>
        <position position="205"/>
    </location>
</feature>
<feature type="lipid moiety-binding region" description="S-palmitoyl cysteine" evidence="1">
    <location>
        <position position="206"/>
    </location>
</feature>
<feature type="lipid moiety-binding region" description="S-geranylgeranyl cysteine" evidence="1">
    <location>
        <position position="209"/>
    </location>
</feature>
<feature type="sequence conflict" description="In Ref. 1; AAA20964/AAA20965." evidence="3" ref="1">
    <original>RA</original>
    <variation>PR</variation>
    <location>
        <begin position="188"/>
        <end position="189"/>
    </location>
</feature>
<reference key="1">
    <citation type="journal article" date="1994" name="Mol. Cell. Biol.">
        <title>Developmental decisions in Aspergillus nidulans are modulated by Ras activity.</title>
        <authorList>
            <person name="Som T."/>
            <person name="Kolaparthi V.S.R."/>
        </authorList>
    </citation>
    <scope>NUCLEOTIDE SEQUENCE [GENOMIC DNA / MRNA]</scope>
</reference>
<reference key="2">
    <citation type="journal article" date="2005" name="Nature">
        <title>Sequencing of Aspergillus nidulans and comparative analysis with A. fumigatus and A. oryzae.</title>
        <authorList>
            <person name="Galagan J.E."/>
            <person name="Calvo S.E."/>
            <person name="Cuomo C."/>
            <person name="Ma L.-J."/>
            <person name="Wortman J.R."/>
            <person name="Batzoglou S."/>
            <person name="Lee S.-I."/>
            <person name="Bastuerkmen M."/>
            <person name="Spevak C.C."/>
            <person name="Clutterbuck J."/>
            <person name="Kapitonov V."/>
            <person name="Jurka J."/>
            <person name="Scazzocchio C."/>
            <person name="Farman M.L."/>
            <person name="Butler J."/>
            <person name="Purcell S."/>
            <person name="Harris S."/>
            <person name="Braus G.H."/>
            <person name="Draht O."/>
            <person name="Busch S."/>
            <person name="D'Enfert C."/>
            <person name="Bouchier C."/>
            <person name="Goldman G.H."/>
            <person name="Bell-Pedersen D."/>
            <person name="Griffiths-Jones S."/>
            <person name="Doonan J.H."/>
            <person name="Yu J."/>
            <person name="Vienken K."/>
            <person name="Pain A."/>
            <person name="Freitag M."/>
            <person name="Selker E.U."/>
            <person name="Archer D.B."/>
            <person name="Penalva M.A."/>
            <person name="Oakley B.R."/>
            <person name="Momany M."/>
            <person name="Tanaka T."/>
            <person name="Kumagai T."/>
            <person name="Asai K."/>
            <person name="Machida M."/>
            <person name="Nierman W.C."/>
            <person name="Denning D.W."/>
            <person name="Caddick M.X."/>
            <person name="Hynes M."/>
            <person name="Paoletti M."/>
            <person name="Fischer R."/>
            <person name="Miller B.L."/>
            <person name="Dyer P.S."/>
            <person name="Sachs M.S."/>
            <person name="Osmani S.A."/>
            <person name="Birren B.W."/>
        </authorList>
    </citation>
    <scope>NUCLEOTIDE SEQUENCE [LARGE SCALE GENOMIC DNA]</scope>
    <source>
        <strain>FGSC A4 / ATCC 38163 / CBS 112.46 / NRRL 194 / M139</strain>
    </source>
</reference>
<reference key="3">
    <citation type="journal article" date="2009" name="Fungal Genet. Biol.">
        <title>The 2008 update of the Aspergillus nidulans genome annotation: a community effort.</title>
        <authorList>
            <person name="Wortman J.R."/>
            <person name="Gilsenan J.M."/>
            <person name="Joardar V."/>
            <person name="Deegan J."/>
            <person name="Clutterbuck J."/>
            <person name="Andersen M.R."/>
            <person name="Archer D."/>
            <person name="Bencina M."/>
            <person name="Braus G."/>
            <person name="Coutinho P."/>
            <person name="von Dohren H."/>
            <person name="Doonan J."/>
            <person name="Driessen A.J."/>
            <person name="Durek P."/>
            <person name="Espeso E."/>
            <person name="Fekete E."/>
            <person name="Flipphi M."/>
            <person name="Estrada C.G."/>
            <person name="Geysens S."/>
            <person name="Goldman G."/>
            <person name="de Groot P.W."/>
            <person name="Hansen K."/>
            <person name="Harris S.D."/>
            <person name="Heinekamp T."/>
            <person name="Helmstaedt K."/>
            <person name="Henrissat B."/>
            <person name="Hofmann G."/>
            <person name="Homan T."/>
            <person name="Horio T."/>
            <person name="Horiuchi H."/>
            <person name="James S."/>
            <person name="Jones M."/>
            <person name="Karaffa L."/>
            <person name="Karanyi Z."/>
            <person name="Kato M."/>
            <person name="Keller N."/>
            <person name="Kelly D.E."/>
            <person name="Kiel J.A."/>
            <person name="Kim J.M."/>
            <person name="van der Klei I.J."/>
            <person name="Klis F.M."/>
            <person name="Kovalchuk A."/>
            <person name="Krasevec N."/>
            <person name="Kubicek C.P."/>
            <person name="Liu B."/>
            <person name="Maccabe A."/>
            <person name="Meyer V."/>
            <person name="Mirabito P."/>
            <person name="Miskei M."/>
            <person name="Mos M."/>
            <person name="Mullins J."/>
            <person name="Nelson D.R."/>
            <person name="Nielsen J."/>
            <person name="Oakley B.R."/>
            <person name="Osmani S.A."/>
            <person name="Pakula T."/>
            <person name="Paszewski A."/>
            <person name="Paulsen I."/>
            <person name="Pilsyk S."/>
            <person name="Pocsi I."/>
            <person name="Punt P.J."/>
            <person name="Ram A.F."/>
            <person name="Ren Q."/>
            <person name="Robellet X."/>
            <person name="Robson G."/>
            <person name="Seiboth B."/>
            <person name="van Solingen P."/>
            <person name="Specht T."/>
            <person name="Sun J."/>
            <person name="Taheri-Talesh N."/>
            <person name="Takeshita N."/>
            <person name="Ussery D."/>
            <person name="vanKuyk P.A."/>
            <person name="Visser H."/>
            <person name="van de Vondervoort P.J."/>
            <person name="de Vries R.P."/>
            <person name="Walton J."/>
            <person name="Xiang X."/>
            <person name="Xiong Y."/>
            <person name="Zeng A.P."/>
            <person name="Brandt B.W."/>
            <person name="Cornell M.J."/>
            <person name="van den Hondel C.A."/>
            <person name="Visser J."/>
            <person name="Oliver S.G."/>
            <person name="Turner G."/>
        </authorList>
    </citation>
    <scope>GENOME REANNOTATION</scope>
    <source>
        <strain>FGSC A4 / ATCC 38163 / CBS 112.46 / NRRL 194 / M139</strain>
    </source>
</reference>
<proteinExistence type="evidence at transcript level"/>
<sequence>MASKFLREYKLVVVGGGGVGKSCLTIQLIQSHFVDEYDPTIEDSYRKQCVIDDEVALLDVLDTAGQEEYSAMREQYMRTGEGFLLVYSITSRQSFEEIMTFQQQILRVKDKDYFPIIVVGNKCDLDKERVVSEQEGESLARQFGCKFIETSAKSRINVENAFYDLVREIRRYNKEMSNPSGSGAFGARAPDSKMDVSEPGESAGCCGKCIVM</sequence>
<comment type="catalytic activity">
    <reaction evidence="2">
        <text>GTP + H2O = GDP + phosphate + H(+)</text>
        <dbReference type="Rhea" id="RHEA:19669"/>
        <dbReference type="ChEBI" id="CHEBI:15377"/>
        <dbReference type="ChEBI" id="CHEBI:15378"/>
        <dbReference type="ChEBI" id="CHEBI:37565"/>
        <dbReference type="ChEBI" id="CHEBI:43474"/>
        <dbReference type="ChEBI" id="CHEBI:58189"/>
        <dbReference type="EC" id="3.6.5.2"/>
    </reaction>
</comment>
<comment type="activity regulation">
    <text>Alternates between an inactive form bound to GDP and an active form bound to GTP. Activated by a guanine nucleotide-exchange factor (GEF) and inactivated by a GTPase-activating protein (GAP).</text>
</comment>
<comment type="subcellular location">
    <subcellularLocation>
        <location evidence="3">Cell membrane</location>
        <topology evidence="3">Lipid-anchor</topology>
        <orientation evidence="3">Cytoplasmic side</orientation>
    </subcellularLocation>
</comment>
<comment type="similarity">
    <text evidence="3">Belongs to the small GTPase superfamily. Ras family.</text>
</comment>